<reference key="1">
    <citation type="journal article" date="1994" name="Appl. Environ. Microbiol.">
        <title>Purification and partial amino acid sequence of curvaticin FS47, a heat-stable bacteriocin produced by Lactobacillus curvatus FS47.</title>
        <authorList>
            <person name="Garver K.I."/>
            <person name="Muriana P.M."/>
        </authorList>
    </citation>
    <scope>PROTEIN SEQUENCE</scope>
    <source>
        <strain>FS47</strain>
    </source>
</reference>
<proteinExistence type="evidence at protein level"/>
<accession>P80323</accession>
<feature type="chain" id="PRO_0000110578" description="Bacteriocin curvaticin FS47">
    <location>
        <begin position="1"/>
        <end position="38" status="greater than"/>
    </location>
</feature>
<feature type="unsure residue">
    <location>
        <position position="6"/>
    </location>
</feature>
<feature type="unsure residue">
    <location>
        <position position="13"/>
    </location>
</feature>
<feature type="unsure residue">
    <location>
        <begin position="35"/>
        <end position="36"/>
    </location>
</feature>
<feature type="unsure residue">
    <location>
        <position position="38"/>
    </location>
</feature>
<feature type="non-terminal residue">
    <location>
        <position position="38"/>
    </location>
</feature>
<dbReference type="TCDB" id="1.C.22.1.5">
    <property type="family name" value="the lactococcin a (lactococcin a) family"/>
</dbReference>
<dbReference type="GO" id="GO:0005576">
    <property type="term" value="C:extracellular region"/>
    <property type="evidence" value="ECO:0007669"/>
    <property type="project" value="UniProtKB-SubCell"/>
</dbReference>
<dbReference type="GO" id="GO:0042742">
    <property type="term" value="P:defense response to bacterium"/>
    <property type="evidence" value="ECO:0007669"/>
    <property type="project" value="UniProtKB-KW"/>
</dbReference>
<dbReference type="GO" id="GO:0031640">
    <property type="term" value="P:killing of cells of another organism"/>
    <property type="evidence" value="ECO:0007669"/>
    <property type="project" value="UniProtKB-KW"/>
</dbReference>
<organism>
    <name type="scientific">Latilactobacillus curvatus</name>
    <name type="common">Lactobacillus curvatus</name>
    <dbReference type="NCBI Taxonomy" id="28038"/>
    <lineage>
        <taxon>Bacteria</taxon>
        <taxon>Bacillati</taxon>
        <taxon>Bacillota</taxon>
        <taxon>Bacilli</taxon>
        <taxon>Lactobacillales</taxon>
        <taxon>Lactobacillaceae</taxon>
        <taxon>Latilactobacillus</taxon>
    </lineage>
</organism>
<name>CU47_LATCU</name>
<comment type="function">
    <text>Bacteriocin active against Listeria monocytogenes, Pediococcus, Enterococcus, Lactobacilli and Bacilli.</text>
</comment>
<comment type="subcellular location">
    <subcellularLocation>
        <location>Secreted</location>
    </subcellularLocation>
</comment>
<protein>
    <recommendedName>
        <fullName>Bacteriocin curvaticin FS47</fullName>
    </recommendedName>
</protein>
<sequence>YTAKQCLQAIGSCGIAGTGAGAAGGPAGAFVGAXVVXI</sequence>
<keyword id="KW-0044">Antibiotic</keyword>
<keyword id="KW-0929">Antimicrobial</keyword>
<keyword id="KW-0078">Bacteriocin</keyword>
<keyword id="KW-0903">Direct protein sequencing</keyword>
<keyword id="KW-0964">Secreted</keyword>